<dbReference type="EMBL" id="BC102377">
    <property type="protein sequence ID" value="AAI02378.1"/>
    <property type="molecule type" value="mRNA"/>
</dbReference>
<dbReference type="RefSeq" id="NP_001070510.1">
    <property type="nucleotide sequence ID" value="NM_001077042.2"/>
</dbReference>
<dbReference type="FunCoup" id="Q3ZCG2">
    <property type="interactions" value="2279"/>
</dbReference>
<dbReference type="STRING" id="9913.ENSBTAP00000039979"/>
<dbReference type="iPTMnet" id="Q3ZCG2"/>
<dbReference type="PaxDb" id="9913-ENSBTAP00000039979"/>
<dbReference type="Ensembl" id="ENSBTAT00000040201.6">
    <property type="protein sequence ID" value="ENSBTAP00000039979.4"/>
    <property type="gene ID" value="ENSBTAG00000027879.6"/>
</dbReference>
<dbReference type="GeneID" id="767977"/>
<dbReference type="KEGG" id="bta:767977"/>
<dbReference type="CTD" id="51660"/>
<dbReference type="VEuPathDB" id="HostDB:ENSBTAG00000027879"/>
<dbReference type="VGNC" id="VGNC:31569">
    <property type="gene designation" value="MPC1"/>
</dbReference>
<dbReference type="eggNOG" id="KOG1590">
    <property type="taxonomic scope" value="Eukaryota"/>
</dbReference>
<dbReference type="GeneTree" id="ENSGT00510000046988"/>
<dbReference type="HOGENOM" id="CLU_099502_3_2_1"/>
<dbReference type="InParanoid" id="Q3ZCG2"/>
<dbReference type="OMA" id="CTTHFWG"/>
<dbReference type="OrthoDB" id="1697690at2759"/>
<dbReference type="TreeFam" id="TF314444"/>
<dbReference type="Proteomes" id="UP000009136">
    <property type="component" value="Chromosome 9"/>
</dbReference>
<dbReference type="Bgee" id="ENSBTAG00000027879">
    <property type="expression patterns" value="Expressed in omental fat pad and 110 other cell types or tissues"/>
</dbReference>
<dbReference type="GO" id="GO:0005743">
    <property type="term" value="C:mitochondrial inner membrane"/>
    <property type="evidence" value="ECO:0000250"/>
    <property type="project" value="UniProtKB"/>
</dbReference>
<dbReference type="GO" id="GO:0050833">
    <property type="term" value="F:pyruvate transmembrane transporter activity"/>
    <property type="evidence" value="ECO:0000318"/>
    <property type="project" value="GO_Central"/>
</dbReference>
<dbReference type="GO" id="GO:0006850">
    <property type="term" value="P:mitochondrial pyruvate transmembrane transport"/>
    <property type="evidence" value="ECO:0000250"/>
    <property type="project" value="UniProtKB"/>
</dbReference>
<dbReference type="InterPro" id="IPR005336">
    <property type="entry name" value="MPC"/>
</dbReference>
<dbReference type="PANTHER" id="PTHR14154">
    <property type="entry name" value="UPF0041 BRAIN PROTEIN 44-RELATED"/>
    <property type="match status" value="1"/>
</dbReference>
<dbReference type="Pfam" id="PF03650">
    <property type="entry name" value="MPC"/>
    <property type="match status" value="1"/>
</dbReference>
<keyword id="KW-0007">Acetylation</keyword>
<keyword id="KW-0472">Membrane</keyword>
<keyword id="KW-0496">Mitochondrion</keyword>
<keyword id="KW-0999">Mitochondrion inner membrane</keyword>
<keyword id="KW-1185">Reference proteome</keyword>
<keyword id="KW-0812">Transmembrane</keyword>
<keyword id="KW-1133">Transmembrane helix</keyword>
<keyword id="KW-0813">Transport</keyword>
<sequence length="109" mass="12389">MAGALVRKAADYVRSKDFRDYLMSTHFWGPVANWGLPIAAINDMKKSPEIISGRMTFALCCYSLTFMRFAYKVQPRNWLLFACHATNEVAQLIQGGRLIRHEMSKKASA</sequence>
<comment type="function">
    <text evidence="2">Mediates the uptake of pyruvate into mitochondria.</text>
</comment>
<comment type="catalytic activity">
    <reaction evidence="2">
        <text>pyruvate(out) + H(+)(out) = pyruvate(in) + H(+)(in)</text>
        <dbReference type="Rhea" id="RHEA:64720"/>
        <dbReference type="ChEBI" id="CHEBI:15361"/>
        <dbReference type="ChEBI" id="CHEBI:15378"/>
    </reaction>
</comment>
<comment type="subunit">
    <text evidence="2">Homodimer. Forms heterodimer with MPC2. The heterodimer is the more stable and dominant form.</text>
</comment>
<comment type="subcellular location">
    <subcellularLocation>
        <location evidence="4">Mitochondrion inner membrane</location>
        <topology evidence="3">Multi-pass membrane protein</topology>
    </subcellularLocation>
</comment>
<comment type="mass spectrometry" mass="12299.5" method="Electrospray" evidence="4"/>
<comment type="similarity">
    <text evidence="5">Belongs to the mitochondrial pyruvate carrier (MPC) (TC 2.A.105) family.</text>
</comment>
<gene>
    <name type="primary">MPC1</name>
    <name type="synonym">BRP44L</name>
</gene>
<reference key="1">
    <citation type="submission" date="2005-08" db="EMBL/GenBank/DDBJ databases">
        <authorList>
            <consortium name="NIH - Mammalian Gene Collection (MGC) project"/>
        </authorList>
    </citation>
    <scope>NUCLEOTIDE SEQUENCE [LARGE SCALE MRNA]</scope>
    <source>
        <strain>Crossbred X Angus</strain>
        <tissue>Ileum</tissue>
    </source>
</reference>
<reference key="2">
    <citation type="journal article" date="2006" name="Proc. Natl. Acad. Sci. U.S.A.">
        <title>Definition of the mitochondrial proteome by measurement of molecular masses of membrane proteins.</title>
        <authorList>
            <person name="Carroll J."/>
            <person name="Fearnley I.M."/>
            <person name="Walker J.E."/>
        </authorList>
    </citation>
    <scope>SUBCELLULAR LOCATION</scope>
    <scope>CLEAVAGE OF INITIATOR METHIONINE</scope>
    <scope>ACETYLATION AT ALA-2</scope>
    <scope>MASS SPECTROMETRY</scope>
</reference>
<name>MPC1_BOVIN</name>
<organism>
    <name type="scientific">Bos taurus</name>
    <name type="common">Bovine</name>
    <dbReference type="NCBI Taxonomy" id="9913"/>
    <lineage>
        <taxon>Eukaryota</taxon>
        <taxon>Metazoa</taxon>
        <taxon>Chordata</taxon>
        <taxon>Craniata</taxon>
        <taxon>Vertebrata</taxon>
        <taxon>Euteleostomi</taxon>
        <taxon>Mammalia</taxon>
        <taxon>Eutheria</taxon>
        <taxon>Laurasiatheria</taxon>
        <taxon>Artiodactyla</taxon>
        <taxon>Ruminantia</taxon>
        <taxon>Pecora</taxon>
        <taxon>Bovidae</taxon>
        <taxon>Bovinae</taxon>
        <taxon>Bos</taxon>
    </lineage>
</organism>
<feature type="initiator methionine" description="Removed" evidence="4">
    <location>
        <position position="1"/>
    </location>
</feature>
<feature type="chain" id="PRO_0000350552" description="Mitochondrial pyruvate carrier 1">
    <location>
        <begin position="2"/>
        <end position="109"/>
    </location>
</feature>
<feature type="topological domain" description="Mitochondrial matrix" evidence="2">
    <location>
        <begin position="2"/>
        <end position="20"/>
    </location>
</feature>
<feature type="transmembrane region" description="Helical" evidence="3">
    <location>
        <begin position="21"/>
        <end position="41"/>
    </location>
</feature>
<feature type="topological domain" description="Mother cell cytoplasmic" evidence="2">
    <location>
        <begin position="42"/>
        <end position="52"/>
    </location>
</feature>
<feature type="transmembrane region" description="Helical" evidence="3">
    <location>
        <begin position="53"/>
        <end position="71"/>
    </location>
</feature>
<feature type="topological domain" description="Mitochondrial matrix" evidence="2">
    <location>
        <begin position="72"/>
        <end position="109"/>
    </location>
</feature>
<feature type="modified residue" description="N-acetylalanine" evidence="4">
    <location>
        <position position="2"/>
    </location>
</feature>
<feature type="modified residue" description="N6-acetyllysine" evidence="1">
    <location>
        <position position="72"/>
    </location>
</feature>
<accession>Q3ZCG2</accession>
<proteinExistence type="evidence at protein level"/>
<evidence type="ECO:0000250" key="1">
    <source>
        <dbReference type="UniProtKB" id="P63030"/>
    </source>
</evidence>
<evidence type="ECO:0000250" key="2">
    <source>
        <dbReference type="UniProtKB" id="Q9Y5U8"/>
    </source>
</evidence>
<evidence type="ECO:0000255" key="3"/>
<evidence type="ECO:0000269" key="4">
    <source>
    </source>
</evidence>
<evidence type="ECO:0000305" key="5"/>
<protein>
    <recommendedName>
        <fullName>Mitochondrial pyruvate carrier 1</fullName>
    </recommendedName>
    <alternativeName>
        <fullName>Brain protein 44-like protein</fullName>
    </alternativeName>
</protein>